<dbReference type="EMBL" id="AC006135">
    <property type="protein sequence ID" value="AAD12216.1"/>
    <property type="molecule type" value="Genomic_DNA"/>
</dbReference>
<dbReference type="EMBL" id="CP002685">
    <property type="protein sequence ID" value="AEC06775.1"/>
    <property type="molecule type" value="Genomic_DNA"/>
</dbReference>
<dbReference type="EMBL" id="BT002903">
    <property type="protein sequence ID" value="AAO22719.1"/>
    <property type="molecule type" value="mRNA"/>
</dbReference>
<dbReference type="EMBL" id="BT004469">
    <property type="protein sequence ID" value="AAO42463.1"/>
    <property type="molecule type" value="mRNA"/>
</dbReference>
<dbReference type="PIR" id="A84565">
    <property type="entry name" value="A84565"/>
</dbReference>
<dbReference type="RefSeq" id="NP_179440.1">
    <property type="nucleotide sequence ID" value="NM_127406.3"/>
</dbReference>
<dbReference type="BioGRID" id="1722">
    <property type="interactions" value="3"/>
</dbReference>
<dbReference type="FunCoup" id="Q9ZU65">
    <property type="interactions" value="62"/>
</dbReference>
<dbReference type="IntAct" id="Q9ZU65">
    <property type="interactions" value="3"/>
</dbReference>
<dbReference type="STRING" id="3702.Q9ZU65"/>
<dbReference type="GlyGen" id="Q9ZU65">
    <property type="glycosylation" value="1 site"/>
</dbReference>
<dbReference type="iPTMnet" id="Q9ZU65"/>
<dbReference type="PaxDb" id="3702-AT2G18500.1"/>
<dbReference type="ProteomicsDB" id="238928"/>
<dbReference type="EnsemblPlants" id="AT2G18500.1">
    <property type="protein sequence ID" value="AT2G18500.1"/>
    <property type="gene ID" value="AT2G18500"/>
</dbReference>
<dbReference type="GeneID" id="816365"/>
<dbReference type="Gramene" id="AT2G18500.1">
    <property type="protein sequence ID" value="AT2G18500.1"/>
    <property type="gene ID" value="AT2G18500"/>
</dbReference>
<dbReference type="KEGG" id="ath:AT2G18500"/>
<dbReference type="Araport" id="AT2G18500"/>
<dbReference type="TAIR" id="AT2G18500">
    <property type="gene designation" value="OFP7"/>
</dbReference>
<dbReference type="eggNOG" id="ENOG502QSY1">
    <property type="taxonomic scope" value="Eukaryota"/>
</dbReference>
<dbReference type="HOGENOM" id="CLU_059469_0_0_1"/>
<dbReference type="InParanoid" id="Q9ZU65"/>
<dbReference type="OMA" id="WHVVAKI"/>
<dbReference type="PhylomeDB" id="Q9ZU65"/>
<dbReference type="PRO" id="PR:Q9ZU65"/>
<dbReference type="Proteomes" id="UP000006548">
    <property type="component" value="Chromosome 2"/>
</dbReference>
<dbReference type="ExpressionAtlas" id="Q9ZU65">
    <property type="expression patterns" value="baseline and differential"/>
</dbReference>
<dbReference type="GO" id="GO:0005634">
    <property type="term" value="C:nucleus"/>
    <property type="evidence" value="ECO:0007669"/>
    <property type="project" value="UniProtKB-SubCell"/>
</dbReference>
<dbReference type="GO" id="GO:0045892">
    <property type="term" value="P:negative regulation of DNA-templated transcription"/>
    <property type="evidence" value="ECO:0000314"/>
    <property type="project" value="TAIR"/>
</dbReference>
<dbReference type="InterPro" id="IPR038933">
    <property type="entry name" value="Ovate"/>
</dbReference>
<dbReference type="InterPro" id="IPR006458">
    <property type="entry name" value="Ovate_C"/>
</dbReference>
<dbReference type="NCBIfam" id="TIGR01568">
    <property type="entry name" value="A_thal_3678"/>
    <property type="match status" value="1"/>
</dbReference>
<dbReference type="PANTHER" id="PTHR33057:SF90">
    <property type="entry name" value="TRANSCRIPTION REPRESSOR OFP7"/>
    <property type="match status" value="1"/>
</dbReference>
<dbReference type="PANTHER" id="PTHR33057">
    <property type="entry name" value="TRANSCRIPTION REPRESSOR OFP7-RELATED"/>
    <property type="match status" value="1"/>
</dbReference>
<dbReference type="Pfam" id="PF04844">
    <property type="entry name" value="Ovate"/>
    <property type="match status" value="1"/>
</dbReference>
<dbReference type="PROSITE" id="PS51754">
    <property type="entry name" value="OVATE"/>
    <property type="match status" value="1"/>
</dbReference>
<organism>
    <name type="scientific">Arabidopsis thaliana</name>
    <name type="common">Mouse-ear cress</name>
    <dbReference type="NCBI Taxonomy" id="3702"/>
    <lineage>
        <taxon>Eukaryota</taxon>
        <taxon>Viridiplantae</taxon>
        <taxon>Streptophyta</taxon>
        <taxon>Embryophyta</taxon>
        <taxon>Tracheophyta</taxon>
        <taxon>Spermatophyta</taxon>
        <taxon>Magnoliopsida</taxon>
        <taxon>eudicotyledons</taxon>
        <taxon>Gunneridae</taxon>
        <taxon>Pentapetalae</taxon>
        <taxon>rosids</taxon>
        <taxon>malvids</taxon>
        <taxon>Brassicales</taxon>
        <taxon>Brassicaceae</taxon>
        <taxon>Camelineae</taxon>
        <taxon>Arabidopsis</taxon>
    </lineage>
</organism>
<evidence type="ECO:0000250" key="1"/>
<evidence type="ECO:0000255" key="2">
    <source>
        <dbReference type="PROSITE-ProRule" id="PRU01090"/>
    </source>
</evidence>
<evidence type="ECO:0000256" key="3">
    <source>
        <dbReference type="SAM" id="MobiDB-lite"/>
    </source>
</evidence>
<evidence type="ECO:0000269" key="4">
    <source>
    </source>
</evidence>
<evidence type="ECO:0000305" key="5">
    <source>
    </source>
</evidence>
<name>OFP7_ARATH</name>
<protein>
    <recommendedName>
        <fullName>Transcription repressor OFP7</fullName>
    </recommendedName>
    <alternativeName>
        <fullName>Ovate family protein 7</fullName>
        <shortName>AtOFP7</shortName>
    </alternativeName>
</protein>
<accession>Q9ZU65</accession>
<comment type="function">
    <text evidence="4">Transcriptional repressor that regulates multiple aspects of plant growth and development through the regulation of BEL1-LIKE (BLH) and KNOX TALE (KNAT) homeodomain transcription factors.</text>
</comment>
<comment type="subcellular location">
    <subcellularLocation>
        <location evidence="1">Nucleus</location>
    </subcellularLocation>
</comment>
<comment type="tissue specificity">
    <text evidence="4">Expressed in roots, shoots, stems, flower buds and siliques.</text>
</comment>
<comment type="miscellaneous">
    <text evidence="5">Plants over-expressing OFP7 show kidney-shaped cotyledons, round and curled leaves, small rosette size, late flowering, reduced fertilization and round seeds.</text>
</comment>
<reference key="1">
    <citation type="journal article" date="1999" name="Nature">
        <title>Sequence and analysis of chromosome 2 of the plant Arabidopsis thaliana.</title>
        <authorList>
            <person name="Lin X."/>
            <person name="Kaul S."/>
            <person name="Rounsley S.D."/>
            <person name="Shea T.P."/>
            <person name="Benito M.-I."/>
            <person name="Town C.D."/>
            <person name="Fujii C.Y."/>
            <person name="Mason T.M."/>
            <person name="Bowman C.L."/>
            <person name="Barnstead M.E."/>
            <person name="Feldblyum T.V."/>
            <person name="Buell C.R."/>
            <person name="Ketchum K.A."/>
            <person name="Lee J.J."/>
            <person name="Ronning C.M."/>
            <person name="Koo H.L."/>
            <person name="Moffat K.S."/>
            <person name="Cronin L.A."/>
            <person name="Shen M."/>
            <person name="Pai G."/>
            <person name="Van Aken S."/>
            <person name="Umayam L."/>
            <person name="Tallon L.J."/>
            <person name="Gill J.E."/>
            <person name="Adams M.D."/>
            <person name="Carrera A.J."/>
            <person name="Creasy T.H."/>
            <person name="Goodman H.M."/>
            <person name="Somerville C.R."/>
            <person name="Copenhaver G.P."/>
            <person name="Preuss D."/>
            <person name="Nierman W.C."/>
            <person name="White O."/>
            <person name="Eisen J.A."/>
            <person name="Salzberg S.L."/>
            <person name="Fraser C.M."/>
            <person name="Venter J.C."/>
        </authorList>
    </citation>
    <scope>NUCLEOTIDE SEQUENCE [LARGE SCALE GENOMIC DNA]</scope>
    <source>
        <strain>cv. Columbia</strain>
    </source>
</reference>
<reference key="2">
    <citation type="journal article" date="2017" name="Plant J.">
        <title>Araport11: a complete reannotation of the Arabidopsis thaliana reference genome.</title>
        <authorList>
            <person name="Cheng C.Y."/>
            <person name="Krishnakumar V."/>
            <person name="Chan A.P."/>
            <person name="Thibaud-Nissen F."/>
            <person name="Schobel S."/>
            <person name="Town C.D."/>
        </authorList>
    </citation>
    <scope>GENOME REANNOTATION</scope>
    <source>
        <strain>cv. Columbia</strain>
    </source>
</reference>
<reference key="3">
    <citation type="journal article" date="2003" name="Science">
        <title>Empirical analysis of transcriptional activity in the Arabidopsis genome.</title>
        <authorList>
            <person name="Yamada K."/>
            <person name="Lim J."/>
            <person name="Dale J.M."/>
            <person name="Chen H."/>
            <person name="Shinn P."/>
            <person name="Palm C.J."/>
            <person name="Southwick A.M."/>
            <person name="Wu H.C."/>
            <person name="Kim C.J."/>
            <person name="Nguyen M."/>
            <person name="Pham P.K."/>
            <person name="Cheuk R.F."/>
            <person name="Karlin-Newmann G."/>
            <person name="Liu S.X."/>
            <person name="Lam B."/>
            <person name="Sakano H."/>
            <person name="Wu T."/>
            <person name="Yu G."/>
            <person name="Miranda M."/>
            <person name="Quach H.L."/>
            <person name="Tripp M."/>
            <person name="Chang C.H."/>
            <person name="Lee J.M."/>
            <person name="Toriumi M.J."/>
            <person name="Chan M.M."/>
            <person name="Tang C.C."/>
            <person name="Onodera C.S."/>
            <person name="Deng J.M."/>
            <person name="Akiyama K."/>
            <person name="Ansari Y."/>
            <person name="Arakawa T."/>
            <person name="Banh J."/>
            <person name="Banno F."/>
            <person name="Bowser L."/>
            <person name="Brooks S.Y."/>
            <person name="Carninci P."/>
            <person name="Chao Q."/>
            <person name="Choy N."/>
            <person name="Enju A."/>
            <person name="Goldsmith A.D."/>
            <person name="Gurjal M."/>
            <person name="Hansen N.F."/>
            <person name="Hayashizaki Y."/>
            <person name="Johnson-Hopson C."/>
            <person name="Hsuan V.W."/>
            <person name="Iida K."/>
            <person name="Karnes M."/>
            <person name="Khan S."/>
            <person name="Koesema E."/>
            <person name="Ishida J."/>
            <person name="Jiang P.X."/>
            <person name="Jones T."/>
            <person name="Kawai J."/>
            <person name="Kamiya A."/>
            <person name="Meyers C."/>
            <person name="Nakajima M."/>
            <person name="Narusaka M."/>
            <person name="Seki M."/>
            <person name="Sakurai T."/>
            <person name="Satou M."/>
            <person name="Tamse R."/>
            <person name="Vaysberg M."/>
            <person name="Wallender E.K."/>
            <person name="Wong C."/>
            <person name="Yamamura Y."/>
            <person name="Yuan S."/>
            <person name="Shinozaki K."/>
            <person name="Davis R.W."/>
            <person name="Theologis A."/>
            <person name="Ecker J.R."/>
        </authorList>
    </citation>
    <scope>NUCLEOTIDE SEQUENCE [LARGE SCALE MRNA]</scope>
    <source>
        <strain>cv. Columbia</strain>
    </source>
</reference>
<reference key="4">
    <citation type="journal article" date="2011" name="PLoS ONE">
        <title>Arabidopsis ovate family proteins, a novel transcriptional repressor family, control multiple aspects of plant growth and development.</title>
        <authorList>
            <person name="Wang S."/>
            <person name="Chang Y."/>
            <person name="Guo J."/>
            <person name="Zeng Q."/>
            <person name="Ellis B.E."/>
            <person name="Chen J.G."/>
        </authorList>
    </citation>
    <scope>FUNCTION</scope>
    <scope>TISSUE SPECIFICITY</scope>
    <scope>GENE FAMILY</scope>
</reference>
<feature type="chain" id="PRO_0000429676" description="Transcription repressor OFP7">
    <location>
        <begin position="1"/>
        <end position="315"/>
    </location>
</feature>
<feature type="domain" description="OVATE" evidence="2">
    <location>
        <begin position="230"/>
        <end position="289"/>
    </location>
</feature>
<feature type="region of interest" description="Disordered" evidence="3">
    <location>
        <begin position="113"/>
        <end position="183"/>
    </location>
</feature>
<feature type="compositionally biased region" description="Basic residues" evidence="3">
    <location>
        <begin position="130"/>
        <end position="145"/>
    </location>
</feature>
<feature type="compositionally biased region" description="Polar residues" evidence="3">
    <location>
        <begin position="160"/>
        <end position="174"/>
    </location>
</feature>
<sequence length="315" mass="35543">MTKRFKLKISRILSFKSCRLKDPSSLPFNPVSSSLRRTSPLVNSSADVTTVPQRRRSSFRLHVLTVFGCGRSSTPLDVDLRNSPVLSPPQTPTFQWESEGKWHVIAQVTEEEYETPRRKIYNGGSEKDNRRRLKKKEKSNSRRRGSISSAEEETDRESLLPSSTNLSPEYSSSELPRVTRRPRQLLKKAVIEEESESSSPPPSPARLSSFVQRLMPCTMAAAVMVEGVAVVKKSEDPYEDFKGSMMEMIVEKKMFEVAELEQLLSCFLSLNAKRHHRAIVRAFSEIWVALFSGGSGGGRRSSSFSSVRLSDYDEC</sequence>
<proteinExistence type="evidence at transcript level"/>
<gene>
    <name type="primary">OFP7</name>
    <name type="ordered locus">At2g18500</name>
    <name type="ORF">F24H14.15</name>
</gene>
<keyword id="KW-0539">Nucleus</keyword>
<keyword id="KW-1185">Reference proteome</keyword>
<keyword id="KW-0678">Repressor</keyword>
<keyword id="KW-0804">Transcription</keyword>
<keyword id="KW-0805">Transcription regulation</keyword>